<protein>
    <recommendedName>
        <fullName evidence="1">Dual-specificity RNA pseudouridine synthase RluA</fullName>
        <ecNumber evidence="1">5.4.99.28</ecNumber>
        <ecNumber evidence="1">5.4.99.29</ecNumber>
    </recommendedName>
    <alternativeName>
        <fullName evidence="1">23S rRNA pseudouridine(746) synthase</fullName>
    </alternativeName>
    <alternativeName>
        <fullName evidence="1">Ribosomal large subunit pseudouridine synthase A</fullName>
    </alternativeName>
    <alternativeName>
        <fullName evidence="1">rRNA pseudouridylate synthase A</fullName>
    </alternativeName>
    <alternativeName>
        <fullName evidence="1">rRNA-uridine isomerase A</fullName>
    </alternativeName>
    <alternativeName>
        <fullName evidence="1">tRNA pseudouridine(32) synthase</fullName>
    </alternativeName>
</protein>
<keyword id="KW-0413">Isomerase</keyword>
<keyword id="KW-1185">Reference proteome</keyword>
<keyword id="KW-0698">rRNA processing</keyword>
<keyword id="KW-0819">tRNA processing</keyword>
<dbReference type="EC" id="5.4.99.28" evidence="1"/>
<dbReference type="EC" id="5.4.99.29" evidence="1"/>
<dbReference type="EMBL" id="AE005674">
    <property type="protein sequence ID" value="AAN41719.1"/>
    <property type="status" value="ALT_FRAME"/>
    <property type="molecule type" value="Genomic_DNA"/>
</dbReference>
<dbReference type="EMBL" id="AE014073">
    <property type="protein sequence ID" value="AAP15599.1"/>
    <property type="molecule type" value="Genomic_DNA"/>
</dbReference>
<dbReference type="RefSeq" id="WP_000525176.1">
    <property type="nucleotide sequence ID" value="NZ_WPGW01000005.1"/>
</dbReference>
<dbReference type="SMR" id="P0AA38"/>
<dbReference type="STRING" id="198214.SF0053"/>
<dbReference type="PaxDb" id="198214-SF0053"/>
<dbReference type="GeneID" id="93777379"/>
<dbReference type="KEGG" id="sfl:SF0053"/>
<dbReference type="KEGG" id="sfx:S0055"/>
<dbReference type="PATRIC" id="fig|198214.7.peg.62"/>
<dbReference type="HOGENOM" id="CLU_016902_11_1_6"/>
<dbReference type="Proteomes" id="UP000001006">
    <property type="component" value="Chromosome"/>
</dbReference>
<dbReference type="Proteomes" id="UP000002673">
    <property type="component" value="Chromosome"/>
</dbReference>
<dbReference type="GO" id="GO:0160142">
    <property type="term" value="F:23S rRNA pseudouridine(746) synthase activity"/>
    <property type="evidence" value="ECO:0007669"/>
    <property type="project" value="UniProtKB-EC"/>
</dbReference>
<dbReference type="GO" id="GO:0003723">
    <property type="term" value="F:RNA binding"/>
    <property type="evidence" value="ECO:0007669"/>
    <property type="project" value="InterPro"/>
</dbReference>
<dbReference type="GO" id="GO:0160151">
    <property type="term" value="F:tRNA pseudouridine(32) synthase activity"/>
    <property type="evidence" value="ECO:0007669"/>
    <property type="project" value="UniProtKB-EC"/>
</dbReference>
<dbReference type="GO" id="GO:0000455">
    <property type="term" value="P:enzyme-directed rRNA pseudouridine synthesis"/>
    <property type="evidence" value="ECO:0007669"/>
    <property type="project" value="TreeGrafter"/>
</dbReference>
<dbReference type="GO" id="GO:0008033">
    <property type="term" value="P:tRNA processing"/>
    <property type="evidence" value="ECO:0007669"/>
    <property type="project" value="UniProtKB-KW"/>
</dbReference>
<dbReference type="CDD" id="cd02869">
    <property type="entry name" value="PseudoU_synth_RluA_like"/>
    <property type="match status" value="1"/>
</dbReference>
<dbReference type="FunFam" id="3.30.2350.10:FF:000005">
    <property type="entry name" value="Pseudouridine synthase"/>
    <property type="match status" value="1"/>
</dbReference>
<dbReference type="Gene3D" id="3.30.2350.10">
    <property type="entry name" value="Pseudouridine synthase"/>
    <property type="match status" value="1"/>
</dbReference>
<dbReference type="InterPro" id="IPR020103">
    <property type="entry name" value="PsdUridine_synth_cat_dom_sf"/>
</dbReference>
<dbReference type="InterPro" id="IPR006224">
    <property type="entry name" value="PsdUridine_synth_RluA-like_CS"/>
</dbReference>
<dbReference type="InterPro" id="IPR006225">
    <property type="entry name" value="PsdUridine_synth_RluC/D"/>
</dbReference>
<dbReference type="InterPro" id="IPR006145">
    <property type="entry name" value="PsdUridine_synth_RsuA/RluA"/>
</dbReference>
<dbReference type="InterPro" id="IPR050188">
    <property type="entry name" value="RluA_PseudoU_synthase"/>
</dbReference>
<dbReference type="NCBIfam" id="NF007543">
    <property type="entry name" value="PRK10158.1"/>
    <property type="match status" value="1"/>
</dbReference>
<dbReference type="NCBIfam" id="TIGR00005">
    <property type="entry name" value="rluA_subfam"/>
    <property type="match status" value="1"/>
</dbReference>
<dbReference type="PANTHER" id="PTHR21600:SF91">
    <property type="entry name" value="DUAL-SPECIFICITY RNA PSEUDOURIDINE SYNTHASE RLUA"/>
    <property type="match status" value="1"/>
</dbReference>
<dbReference type="PANTHER" id="PTHR21600">
    <property type="entry name" value="MITOCHONDRIAL RNA PSEUDOURIDINE SYNTHASE"/>
    <property type="match status" value="1"/>
</dbReference>
<dbReference type="Pfam" id="PF00849">
    <property type="entry name" value="PseudoU_synth_2"/>
    <property type="match status" value="1"/>
</dbReference>
<dbReference type="SUPFAM" id="SSF55120">
    <property type="entry name" value="Pseudouridine synthase"/>
    <property type="match status" value="1"/>
</dbReference>
<dbReference type="PROSITE" id="PS01129">
    <property type="entry name" value="PSI_RLU"/>
    <property type="match status" value="1"/>
</dbReference>
<gene>
    <name type="primary">rluA</name>
    <name type="ordered locus">SF0053</name>
    <name type="ordered locus">S0055</name>
</gene>
<sequence length="219" mass="24861">MGMENYNPPQEPWLVILYQDDHIMVVNKPSGLLSVPGRLEEHKDSVMTRIQRDYPQAESVHRLDMATSGVIVVALTKAAERELKRQFREREPKKQYVARVWGHPSPAEGLVDLPLICDWPNRPKQKVCYETGKPAQTEYEVVEYAADNTARVVLKPITGRSHQLRVHMLALGHPILGDRFYASPEARAMAPRLLLHAEMLTITHPAYGNSMTFKAPADF</sequence>
<reference key="1">
    <citation type="journal article" date="2002" name="Nucleic Acids Res.">
        <title>Genome sequence of Shigella flexneri 2a: insights into pathogenicity through comparison with genomes of Escherichia coli K12 and O157.</title>
        <authorList>
            <person name="Jin Q."/>
            <person name="Yuan Z."/>
            <person name="Xu J."/>
            <person name="Wang Y."/>
            <person name="Shen Y."/>
            <person name="Lu W."/>
            <person name="Wang J."/>
            <person name="Liu H."/>
            <person name="Yang J."/>
            <person name="Yang F."/>
            <person name="Zhang X."/>
            <person name="Zhang J."/>
            <person name="Yang G."/>
            <person name="Wu H."/>
            <person name="Qu D."/>
            <person name="Dong J."/>
            <person name="Sun L."/>
            <person name="Xue Y."/>
            <person name="Zhao A."/>
            <person name="Gao Y."/>
            <person name="Zhu J."/>
            <person name="Kan B."/>
            <person name="Ding K."/>
            <person name="Chen S."/>
            <person name="Cheng H."/>
            <person name="Yao Z."/>
            <person name="He B."/>
            <person name="Chen R."/>
            <person name="Ma D."/>
            <person name="Qiang B."/>
            <person name="Wen Y."/>
            <person name="Hou Y."/>
            <person name="Yu J."/>
        </authorList>
    </citation>
    <scope>NUCLEOTIDE SEQUENCE [LARGE SCALE GENOMIC DNA]</scope>
    <source>
        <strain>301 / Serotype 2a</strain>
    </source>
</reference>
<reference key="2">
    <citation type="journal article" date="2003" name="Infect. Immun.">
        <title>Complete genome sequence and comparative genomics of Shigella flexneri serotype 2a strain 2457T.</title>
        <authorList>
            <person name="Wei J."/>
            <person name="Goldberg M.B."/>
            <person name="Burland V."/>
            <person name="Venkatesan M.M."/>
            <person name="Deng W."/>
            <person name="Fournier G."/>
            <person name="Mayhew G.F."/>
            <person name="Plunkett G. III"/>
            <person name="Rose D.J."/>
            <person name="Darling A."/>
            <person name="Mau B."/>
            <person name="Perna N.T."/>
            <person name="Payne S.M."/>
            <person name="Runyen-Janecky L.J."/>
            <person name="Zhou S."/>
            <person name="Schwartz D.C."/>
            <person name="Blattner F.R."/>
        </authorList>
    </citation>
    <scope>NUCLEOTIDE SEQUENCE [LARGE SCALE GENOMIC DNA]</scope>
    <source>
        <strain>ATCC 700930 / 2457T / Serotype 2a</strain>
    </source>
</reference>
<evidence type="ECO:0000250" key="1">
    <source>
        <dbReference type="UniProtKB" id="P0AA37"/>
    </source>
</evidence>
<evidence type="ECO:0000305" key="2"/>
<name>RLUA_SHIFL</name>
<proteinExistence type="inferred from homology"/>
<feature type="initiator methionine" description="Removed" evidence="1">
    <location>
        <position position="1"/>
    </location>
</feature>
<feature type="chain" id="PRO_0000162659" description="Dual-specificity RNA pseudouridine synthase RluA">
    <location>
        <begin position="2"/>
        <end position="219"/>
    </location>
</feature>
<feature type="active site" evidence="1">
    <location>
        <position position="64"/>
    </location>
</feature>
<accession>P0AA38</accession>
<accession>P39219</accession>
<accession>Q83MG7</accession>
<organism>
    <name type="scientific">Shigella flexneri</name>
    <dbReference type="NCBI Taxonomy" id="623"/>
    <lineage>
        <taxon>Bacteria</taxon>
        <taxon>Pseudomonadati</taxon>
        <taxon>Pseudomonadota</taxon>
        <taxon>Gammaproteobacteria</taxon>
        <taxon>Enterobacterales</taxon>
        <taxon>Enterobacteriaceae</taxon>
        <taxon>Shigella</taxon>
    </lineage>
</organism>
<comment type="function">
    <text evidence="1">Dual specificity enzyme that catalyzes the synthesis of pseudouridine from uracil-746 in 23S ribosomal RNA and from uracil-32 in the anticodon stem and loop of transfer RNAs.</text>
</comment>
<comment type="catalytic activity">
    <reaction evidence="1">
        <text>uridine(32) in tRNA = pseudouridine(32) in tRNA</text>
        <dbReference type="Rhea" id="RHEA:42544"/>
        <dbReference type="Rhea" id="RHEA-COMP:10107"/>
        <dbReference type="Rhea" id="RHEA-COMP:10108"/>
        <dbReference type="ChEBI" id="CHEBI:65314"/>
        <dbReference type="ChEBI" id="CHEBI:65315"/>
        <dbReference type="EC" id="5.4.99.28"/>
    </reaction>
</comment>
<comment type="catalytic activity">
    <reaction evidence="1">
        <text>uridine(746) in 23S rRNA = pseudouridine(746) in 23S rRNA</text>
        <dbReference type="Rhea" id="RHEA:42548"/>
        <dbReference type="Rhea" id="RHEA-COMP:10109"/>
        <dbReference type="Rhea" id="RHEA-COMP:10110"/>
        <dbReference type="ChEBI" id="CHEBI:65314"/>
        <dbReference type="ChEBI" id="CHEBI:65315"/>
        <dbReference type="EC" id="5.4.99.29"/>
    </reaction>
</comment>
<comment type="similarity">
    <text evidence="2">Belongs to the pseudouridine synthase RluA family.</text>
</comment>
<comment type="sequence caution" evidence="2">
    <conflict type="frameshift">
        <sequence resource="EMBL-CDS" id="AAN41719"/>
    </conflict>
</comment>